<protein>
    <recommendedName>
        <fullName evidence="15">Aminopeptidase N</fullName>
        <shortName>AP-N</shortName>
        <shortName>pAPN</shortName>
        <ecNumber evidence="12">3.4.11.2</ecNumber>
    </recommendedName>
    <alternativeName>
        <fullName>Alanyl aminopeptidase</fullName>
    </alternativeName>
    <alternativeName>
        <fullName>Aminopeptidase M</fullName>
        <shortName>AP-M</shortName>
    </alternativeName>
    <alternativeName>
        <fullName>Microsomal aminopeptidase</fullName>
    </alternativeName>
    <alternativeName>
        <fullName>gp130</fullName>
    </alternativeName>
    <cdAntigenName>CD13</cdAntigenName>
</protein>
<evidence type="ECO:0000250" key="1">
    <source>
        <dbReference type="UniProtKB" id="P15144"/>
    </source>
</evidence>
<evidence type="ECO:0000250" key="2">
    <source>
        <dbReference type="UniProtKB" id="P97449"/>
    </source>
</evidence>
<evidence type="ECO:0000255" key="3"/>
<evidence type="ECO:0000255" key="4">
    <source>
        <dbReference type="PROSITE-ProRule" id="PRU10095"/>
    </source>
</evidence>
<evidence type="ECO:0000269" key="5">
    <source>
    </source>
</evidence>
<evidence type="ECO:0000269" key="6">
    <source>
    </source>
</evidence>
<evidence type="ECO:0000269" key="7">
    <source>
    </source>
</evidence>
<evidence type="ECO:0000269" key="8">
    <source>
    </source>
</evidence>
<evidence type="ECO:0000269" key="9">
    <source>
    </source>
</evidence>
<evidence type="ECO:0000269" key="10">
    <source>
    </source>
</evidence>
<evidence type="ECO:0000269" key="11">
    <source>
    </source>
</evidence>
<evidence type="ECO:0000269" key="12">
    <source>
    </source>
</evidence>
<evidence type="ECO:0000269" key="13">
    <source>
    </source>
</evidence>
<evidence type="ECO:0000269" key="14">
    <source>
    </source>
</evidence>
<evidence type="ECO:0000305" key="15"/>
<evidence type="ECO:0000305" key="16">
    <source>
    </source>
</evidence>
<evidence type="ECO:0007744" key="17">
    <source>
        <dbReference type="PDB" id="4F5C"/>
    </source>
</evidence>
<evidence type="ECO:0007829" key="18">
    <source>
        <dbReference type="PDB" id="4F5C"/>
    </source>
</evidence>
<evidence type="ECO:0007829" key="19">
    <source>
        <dbReference type="PDB" id="4FKE"/>
    </source>
</evidence>
<evidence type="ECO:0007829" key="20">
    <source>
        <dbReference type="PDB" id="4FKK"/>
    </source>
</evidence>
<evidence type="ECO:0007829" key="21">
    <source>
        <dbReference type="PDB" id="5LDS"/>
    </source>
</evidence>
<evidence type="ECO:0007829" key="22">
    <source>
        <dbReference type="PDB" id="7VPP"/>
    </source>
</evidence>
<comment type="function">
    <text evidence="1 2 12">Broad specificity aminopeptidase which plays a role in the final digestion of peptides generated from hydrolysis of proteins by gastric and pancreatic proteases. Also involved in the processing of various peptides including peptide hormones, such as angiotensin III and IV, neuropeptides, and chemokines. May also be involved the cleavage of peptides bound to major histocompatibility complex class II molecules of antigen presenting cells. May have a role in angiogenesis and promote cholesterol crystallization (By similarity). It is able to degrade Leu-enkephalin and Met-enkephalin but not cholecystokinin CCK8, neuromedin C (GRP-10), somatostatin-14, substance P and vasoactive intestinal peptide (PubMed:8963385). May have a role in amino acid transport by acting as binding partner of amino acid transporter SLC6A19 and regulating its activity (By similarity).</text>
</comment>
<comment type="function">
    <text evidence="5 10 11 13 14">(Microbial infection) In case of porcine transmissible gastroenteritis coronavirus (TGEV) and porcine respiratory coronavirus (PRCoV) infections, serves as a receptor for TGEV and PRCoV spike glycoprotein in a species-specific manner.</text>
</comment>
<comment type="catalytic activity">
    <reaction evidence="12">
        <text>Release of an N-terminal amino acid, Xaa-|-Yaa- from a peptide, amide or arylamide. Xaa is preferably Ala, but may be most amino acids including Pro (slow action). When a terminal hydrophobic residue is followed by a prolyl residue, the two may be released as an intact Xaa-Pro dipeptide.</text>
        <dbReference type="EC" id="3.4.11.2"/>
    </reaction>
</comment>
<comment type="cofactor">
    <cofactor evidence="7">
        <name>Zn(2+)</name>
        <dbReference type="ChEBI" id="CHEBI:29105"/>
    </cofactor>
    <text evidence="7">Binds 1 zinc ion per subunit.</text>
</comment>
<comment type="subunit">
    <text evidence="2 7 9">Homodimer. Interacts with SLC6A19 (By similarity).</text>
</comment>
<comment type="subunit">
    <text evidence="7 11 13 14">(Microbial infection) Interacts with TGEV and PRCoV spike glycoprotein.</text>
</comment>
<comment type="subcellular location">
    <subcellularLocation>
        <location evidence="11">Cell membrane</location>
        <topology evidence="16">Single-pass type II membrane protein</topology>
    </subcellularLocation>
    <text evidence="1">Also found as a soluble form.</text>
</comment>
<comment type="PTM">
    <text evidence="8">Sulfated.</text>
</comment>
<comment type="PTM">
    <text evidence="1">N- and O-glycosylated.</text>
</comment>
<comment type="PTM">
    <text evidence="1">May undergo proteolysis and give rise to a soluble form.</text>
</comment>
<comment type="similarity">
    <text evidence="15">Belongs to the peptidase M1 family.</text>
</comment>
<name>AMPN_PIG</name>
<dbReference type="EC" id="3.4.11.2" evidence="12"/>
<dbReference type="EMBL" id="Z29522">
    <property type="protein sequence ID" value="CAA82641.1"/>
    <property type="molecule type" value="mRNA"/>
</dbReference>
<dbReference type="EMBL" id="X16088">
    <property type="protein sequence ID" value="CAA34216.1"/>
    <property type="status" value="ALT_TERM"/>
    <property type="molecule type" value="Genomic_DNA"/>
</dbReference>
<dbReference type="EMBL" id="F14846">
    <property type="protein sequence ID" value="CAA23291.1"/>
    <property type="molecule type" value="mRNA"/>
</dbReference>
<dbReference type="PIR" id="A53984">
    <property type="entry name" value="A53984"/>
</dbReference>
<dbReference type="RefSeq" id="NP_999442.1">
    <property type="nucleotide sequence ID" value="NM_214277.1"/>
</dbReference>
<dbReference type="PDB" id="4F5C">
    <property type="method" value="X-ray"/>
    <property type="resolution" value="3.20 A"/>
    <property type="chains" value="A/B=36-963"/>
</dbReference>
<dbReference type="PDB" id="4FKE">
    <property type="method" value="X-ray"/>
    <property type="resolution" value="1.85 A"/>
    <property type="chains" value="A=62-963"/>
</dbReference>
<dbReference type="PDB" id="4FKH">
    <property type="method" value="X-ray"/>
    <property type="resolution" value="2.05 A"/>
    <property type="chains" value="A=62-963"/>
</dbReference>
<dbReference type="PDB" id="4FKK">
    <property type="method" value="X-ray"/>
    <property type="resolution" value="2.60 A"/>
    <property type="chains" value="A=62-963"/>
</dbReference>
<dbReference type="PDB" id="4HOM">
    <property type="method" value="X-ray"/>
    <property type="resolution" value="1.90 A"/>
    <property type="chains" value="A=63-963"/>
</dbReference>
<dbReference type="PDB" id="4NAQ">
    <property type="method" value="X-ray"/>
    <property type="resolution" value="2.10 A"/>
    <property type="chains" value="A=64-963"/>
</dbReference>
<dbReference type="PDB" id="4NZ8">
    <property type="method" value="X-ray"/>
    <property type="resolution" value="2.00 A"/>
    <property type="chains" value="A=64-963"/>
</dbReference>
<dbReference type="PDB" id="4OU3">
    <property type="method" value="X-ray"/>
    <property type="resolution" value="1.95 A"/>
    <property type="chains" value="A=63-963"/>
</dbReference>
<dbReference type="PDB" id="5LDS">
    <property type="method" value="X-ray"/>
    <property type="resolution" value="2.00 A"/>
    <property type="chains" value="A/B/C/D=36-963"/>
</dbReference>
<dbReference type="PDB" id="5LG6">
    <property type="method" value="X-ray"/>
    <property type="resolution" value="2.50 A"/>
    <property type="chains" value="A/B=36-963"/>
</dbReference>
<dbReference type="PDB" id="5Z65">
    <property type="method" value="X-ray"/>
    <property type="resolution" value="2.65 A"/>
    <property type="chains" value="A=62-963"/>
</dbReference>
<dbReference type="PDB" id="6BUY">
    <property type="method" value="X-ray"/>
    <property type="resolution" value="2.10 A"/>
    <property type="chains" value="A=63-963"/>
</dbReference>
<dbReference type="PDB" id="6BV0">
    <property type="method" value="X-ray"/>
    <property type="resolution" value="1.86 A"/>
    <property type="chains" value="A=63-963"/>
</dbReference>
<dbReference type="PDB" id="6BV1">
    <property type="method" value="X-ray"/>
    <property type="resolution" value="2.00 A"/>
    <property type="chains" value="A=63-963"/>
</dbReference>
<dbReference type="PDB" id="6BV2">
    <property type="method" value="X-ray"/>
    <property type="resolution" value="2.14 A"/>
    <property type="chains" value="A=63-963"/>
</dbReference>
<dbReference type="PDB" id="6BV3">
    <property type="method" value="X-ray"/>
    <property type="resolution" value="2.20 A"/>
    <property type="chains" value="A=63-963"/>
</dbReference>
<dbReference type="PDB" id="6BV4">
    <property type="method" value="X-ray"/>
    <property type="resolution" value="2.02 A"/>
    <property type="chains" value="A=63-963"/>
</dbReference>
<dbReference type="PDB" id="7VPP">
    <property type="method" value="X-ray"/>
    <property type="resolution" value="2.69 A"/>
    <property type="chains" value="A/C=58-961"/>
</dbReference>
<dbReference type="PDBsum" id="4F5C"/>
<dbReference type="PDBsum" id="4FKE"/>
<dbReference type="PDBsum" id="4FKH"/>
<dbReference type="PDBsum" id="4FKK"/>
<dbReference type="PDBsum" id="4HOM"/>
<dbReference type="PDBsum" id="4NAQ"/>
<dbReference type="PDBsum" id="4NZ8"/>
<dbReference type="PDBsum" id="4OU3"/>
<dbReference type="PDBsum" id="5LDS"/>
<dbReference type="PDBsum" id="5LG6"/>
<dbReference type="PDBsum" id="5Z65"/>
<dbReference type="PDBsum" id="6BUY"/>
<dbReference type="PDBsum" id="6BV0"/>
<dbReference type="PDBsum" id="6BV1"/>
<dbReference type="PDBsum" id="6BV2"/>
<dbReference type="PDBsum" id="6BV3"/>
<dbReference type="PDBsum" id="6BV4"/>
<dbReference type="PDBsum" id="7VPP"/>
<dbReference type="SMR" id="P15145"/>
<dbReference type="FunCoup" id="P15145">
    <property type="interactions" value="333"/>
</dbReference>
<dbReference type="STRING" id="9823.ENSSSCP00000064055"/>
<dbReference type="BindingDB" id="P15145"/>
<dbReference type="ChEMBL" id="CHEMBL2590"/>
<dbReference type="DrugCentral" id="P15145"/>
<dbReference type="MEROPS" id="M01.001"/>
<dbReference type="GlyCosmos" id="P15145">
    <property type="glycosylation" value="14 sites, No reported glycans"/>
</dbReference>
<dbReference type="GlyGen" id="P15145">
    <property type="glycosylation" value="14 sites"/>
</dbReference>
<dbReference type="iPTMnet" id="P15145"/>
<dbReference type="PaxDb" id="9823-ENSSSCP00000029051"/>
<dbReference type="PeptideAtlas" id="P15145"/>
<dbReference type="ABCD" id="P15145">
    <property type="antibodies" value="31 sequenced antibodies"/>
</dbReference>
<dbReference type="GeneID" id="397520"/>
<dbReference type="KEGG" id="ssc:397520"/>
<dbReference type="CTD" id="290"/>
<dbReference type="eggNOG" id="KOG1046">
    <property type="taxonomic scope" value="Eukaryota"/>
</dbReference>
<dbReference type="InParanoid" id="P15145"/>
<dbReference type="OrthoDB" id="510539at2759"/>
<dbReference type="SABIO-RK" id="P15145"/>
<dbReference type="EvolutionaryTrace" id="P15145"/>
<dbReference type="PRO" id="PR:P15145"/>
<dbReference type="Proteomes" id="UP000008227">
    <property type="component" value="Unplaced"/>
</dbReference>
<dbReference type="Proteomes" id="UP000314985">
    <property type="component" value="Unplaced"/>
</dbReference>
<dbReference type="Proteomes" id="UP000694570">
    <property type="component" value="Unplaced"/>
</dbReference>
<dbReference type="Proteomes" id="UP000694571">
    <property type="component" value="Unplaced"/>
</dbReference>
<dbReference type="Proteomes" id="UP000694720">
    <property type="component" value="Unplaced"/>
</dbReference>
<dbReference type="Proteomes" id="UP000694722">
    <property type="component" value="Unplaced"/>
</dbReference>
<dbReference type="Proteomes" id="UP000694723">
    <property type="component" value="Unplaced"/>
</dbReference>
<dbReference type="Proteomes" id="UP000694724">
    <property type="component" value="Unplaced"/>
</dbReference>
<dbReference type="Proteomes" id="UP000694725">
    <property type="component" value="Unplaced"/>
</dbReference>
<dbReference type="Proteomes" id="UP000694726">
    <property type="component" value="Unplaced"/>
</dbReference>
<dbReference type="Proteomes" id="UP000694727">
    <property type="component" value="Unplaced"/>
</dbReference>
<dbReference type="Proteomes" id="UP000694728">
    <property type="component" value="Unplaced"/>
</dbReference>
<dbReference type="GO" id="GO:0005737">
    <property type="term" value="C:cytoplasm"/>
    <property type="evidence" value="ECO:0000318"/>
    <property type="project" value="GO_Central"/>
</dbReference>
<dbReference type="GO" id="GO:0005615">
    <property type="term" value="C:extracellular space"/>
    <property type="evidence" value="ECO:0000318"/>
    <property type="project" value="GO_Central"/>
</dbReference>
<dbReference type="GO" id="GO:0005886">
    <property type="term" value="C:plasma membrane"/>
    <property type="evidence" value="ECO:0000250"/>
    <property type="project" value="UniProtKB"/>
</dbReference>
<dbReference type="GO" id="GO:0016285">
    <property type="term" value="F:alanyl aminopeptidase activity"/>
    <property type="evidence" value="ECO:0007669"/>
    <property type="project" value="UniProtKB-EC"/>
</dbReference>
<dbReference type="GO" id="GO:0070006">
    <property type="term" value="F:metalloaminopeptidase activity"/>
    <property type="evidence" value="ECO:0000318"/>
    <property type="project" value="GO_Central"/>
</dbReference>
<dbReference type="GO" id="GO:0042277">
    <property type="term" value="F:peptide binding"/>
    <property type="evidence" value="ECO:0000318"/>
    <property type="project" value="GO_Central"/>
</dbReference>
<dbReference type="GO" id="GO:0001618">
    <property type="term" value="F:virus receptor activity"/>
    <property type="evidence" value="ECO:0007669"/>
    <property type="project" value="UniProtKB-KW"/>
</dbReference>
<dbReference type="GO" id="GO:0008270">
    <property type="term" value="F:zinc ion binding"/>
    <property type="evidence" value="ECO:0000318"/>
    <property type="project" value="GO_Central"/>
</dbReference>
<dbReference type="GO" id="GO:0001525">
    <property type="term" value="P:angiogenesis"/>
    <property type="evidence" value="ECO:0007669"/>
    <property type="project" value="UniProtKB-KW"/>
</dbReference>
<dbReference type="GO" id="GO:0030154">
    <property type="term" value="P:cell differentiation"/>
    <property type="evidence" value="ECO:0007669"/>
    <property type="project" value="UniProtKB-KW"/>
</dbReference>
<dbReference type="GO" id="GO:0043171">
    <property type="term" value="P:peptide catabolic process"/>
    <property type="evidence" value="ECO:0000318"/>
    <property type="project" value="GO_Central"/>
</dbReference>
<dbReference type="GO" id="GO:0006508">
    <property type="term" value="P:proteolysis"/>
    <property type="evidence" value="ECO:0000318"/>
    <property type="project" value="GO_Central"/>
</dbReference>
<dbReference type="CDD" id="cd09601">
    <property type="entry name" value="M1_APN-Q_like"/>
    <property type="match status" value="1"/>
</dbReference>
<dbReference type="FunFam" id="2.60.40.1910:FF:000005">
    <property type="entry name" value="Aminopeptidase"/>
    <property type="match status" value="1"/>
</dbReference>
<dbReference type="FunFam" id="1.25.50.20:FF:000012">
    <property type="entry name" value="Aminopeptidase N"/>
    <property type="match status" value="1"/>
</dbReference>
<dbReference type="FunFam" id="2.60.40.1730:FF:000012">
    <property type="entry name" value="Aminopeptidase N"/>
    <property type="match status" value="1"/>
</dbReference>
<dbReference type="FunFam" id="1.10.390.10:FF:000016">
    <property type="entry name" value="Glutamyl aminopeptidase"/>
    <property type="match status" value="1"/>
</dbReference>
<dbReference type="Gene3D" id="1.25.50.20">
    <property type="match status" value="1"/>
</dbReference>
<dbReference type="Gene3D" id="2.60.40.1910">
    <property type="match status" value="1"/>
</dbReference>
<dbReference type="Gene3D" id="1.10.390.10">
    <property type="entry name" value="Neutral Protease Domain 2"/>
    <property type="match status" value="1"/>
</dbReference>
<dbReference type="Gene3D" id="2.60.40.1730">
    <property type="entry name" value="tricorn interacting facor f3 domain"/>
    <property type="match status" value="1"/>
</dbReference>
<dbReference type="InterPro" id="IPR045357">
    <property type="entry name" value="Aminopeptidase_N-like_N"/>
</dbReference>
<dbReference type="InterPro" id="IPR042097">
    <property type="entry name" value="Aminopeptidase_N-like_N_sf"/>
</dbReference>
<dbReference type="InterPro" id="IPR024571">
    <property type="entry name" value="ERAP1-like_C_dom"/>
</dbReference>
<dbReference type="InterPro" id="IPR034016">
    <property type="entry name" value="M1_APN-typ"/>
</dbReference>
<dbReference type="InterPro" id="IPR001930">
    <property type="entry name" value="Peptidase_M1"/>
</dbReference>
<dbReference type="InterPro" id="IPR050344">
    <property type="entry name" value="Peptidase_M1_aminopeptidases"/>
</dbReference>
<dbReference type="InterPro" id="IPR014782">
    <property type="entry name" value="Peptidase_M1_dom"/>
</dbReference>
<dbReference type="InterPro" id="IPR027268">
    <property type="entry name" value="Peptidase_M4/M1_CTD_sf"/>
</dbReference>
<dbReference type="PANTHER" id="PTHR11533:SF172">
    <property type="entry name" value="AMINOPEPTIDASE N"/>
    <property type="match status" value="1"/>
</dbReference>
<dbReference type="PANTHER" id="PTHR11533">
    <property type="entry name" value="PROTEASE M1 ZINC METALLOPROTEASE"/>
    <property type="match status" value="1"/>
</dbReference>
<dbReference type="Pfam" id="PF11838">
    <property type="entry name" value="ERAP1_C"/>
    <property type="match status" value="1"/>
</dbReference>
<dbReference type="Pfam" id="PF01433">
    <property type="entry name" value="Peptidase_M1"/>
    <property type="match status" value="1"/>
</dbReference>
<dbReference type="Pfam" id="PF17900">
    <property type="entry name" value="Peptidase_M1_N"/>
    <property type="match status" value="1"/>
</dbReference>
<dbReference type="PRINTS" id="PR00756">
    <property type="entry name" value="ALADIPTASE"/>
</dbReference>
<dbReference type="SUPFAM" id="SSF63737">
    <property type="entry name" value="Leukotriene A4 hydrolase N-terminal domain"/>
    <property type="match status" value="1"/>
</dbReference>
<dbReference type="SUPFAM" id="SSF55486">
    <property type="entry name" value="Metalloproteases ('zincins'), catalytic domain"/>
    <property type="match status" value="1"/>
</dbReference>
<dbReference type="PROSITE" id="PS00142">
    <property type="entry name" value="ZINC_PROTEASE"/>
    <property type="match status" value="1"/>
</dbReference>
<sequence length="963" mass="108832">MAKGFYISKALGILGILLGVAAVATIIALSVVYAQEKNKNAEHVPQAPTSPTITTTAAITLDQSKPWNRYRLPTTLLPDSYNVTLRPYLTPNADGLYIFKGKSIVRLLCQEPTDVIIIHSKKLNYTTQGHMVVLRGVGDSQVPEIDRTELVELTEYLVVHLKGSLQPGHMYEMESEFQGELADDLAGFYRSEYMEGNVKKVLATTQMQSTDARKSFPCFDEPAMKATFNITLIHPNNLTALSNMPPKGSSTPLAEDPNWSVTEFETTPVMSTYLLAYIVSEFQSVNETAQNGVLIRIWARPNAIAEGHGMYALNVTGPILNFFANHYNTSYPLPKSDQIALPDFNAGAMENWGLVTYRENALLFDPQSSSISNKERVVTVIAHELAHQWFGNLVTLAWWNDLWLNEGFASYVEYLGADHAEPTWNLKDLIVPGDVYRVMAVDALASSHPLTTPAEEVNTPAQISEMFDSISYSKGASVIRMLSNFLTEDLFKEGLASYLHAFAYQNTTYLDLWEHLQKAVDAQTSIRLPDTVRAIMDRWTLQMGFPVITVDTKTGNISQKHFLLDSESNVTRSSAFDYLWIVPISSIKNGVMQDHYWLRDVSQAQNDLFKTASDDWVLLNVNVTGYFQVNYDEDNWRMIQHQLQTNLSVIPVINRAQVIYDSFNLATAHMVPVTLALDNTLFLNGEKEYMPWQAALSSLSYFSLMFDRSEVYGPMKKYLRKQVEPLFQHFETLTKNWTERPENLMDQYSEINAISTACSNGLPQCENLAKTLFDQWMSDPENNPIHPNLRSTIYCNAIAQGGQDQWDFAWGQLQQAQLVNEADKLRSALACSNEVWLLNRYLGYTLNPDLIRKQDATSTINSIASNVIGQPLAWDFVQSNWKKLFQDYGGGSFSFSNLIQGVTRRFSSEFELQQLEQFKKNNMDVGFGSGTRALEQALEKTKANIKWVKENKEVVLNWFIEHS</sequence>
<organism>
    <name type="scientific">Sus scrofa</name>
    <name type="common">Pig</name>
    <dbReference type="NCBI Taxonomy" id="9823"/>
    <lineage>
        <taxon>Eukaryota</taxon>
        <taxon>Metazoa</taxon>
        <taxon>Chordata</taxon>
        <taxon>Craniata</taxon>
        <taxon>Vertebrata</taxon>
        <taxon>Euteleostomi</taxon>
        <taxon>Mammalia</taxon>
        <taxon>Eutheria</taxon>
        <taxon>Laurasiatheria</taxon>
        <taxon>Artiodactyla</taxon>
        <taxon>Suina</taxon>
        <taxon>Suidae</taxon>
        <taxon>Sus</taxon>
    </lineage>
</organism>
<feature type="initiator methionine" description="Removed" evidence="6">
    <location>
        <position position="1"/>
    </location>
</feature>
<feature type="chain" id="PRO_0000095083" description="Aminopeptidase N">
    <location>
        <begin position="2"/>
        <end position="963"/>
    </location>
</feature>
<feature type="topological domain" description="Cytoplasmic" evidence="16">
    <location>
        <begin position="2"/>
        <end position="8"/>
    </location>
</feature>
<feature type="transmembrane region" description="Helical; Signal-anchor for type II membrane protein" evidence="3">
    <location>
        <begin position="9"/>
        <end position="32"/>
    </location>
</feature>
<feature type="topological domain" description="Extracellular" evidence="11">
    <location>
        <begin position="33"/>
        <end position="963"/>
    </location>
</feature>
<feature type="region of interest" description="Cytosolic Ser/Thr-rich junction">
    <location>
        <begin position="33"/>
        <end position="64"/>
    </location>
</feature>
<feature type="region of interest" description="Metalloprotease">
    <location>
        <begin position="65"/>
        <end position="963"/>
    </location>
</feature>
<feature type="region of interest" description="Interaction with TGEV spike glycoprotein" evidence="11 13 14">
    <location>
        <begin position="717"/>
        <end position="813"/>
    </location>
</feature>
<feature type="active site" description="Proton acceptor" evidence="4">
    <location>
        <position position="384"/>
    </location>
</feature>
<feature type="binding site" evidence="1">
    <location>
        <begin position="347"/>
        <end position="351"/>
    </location>
    <ligand>
        <name>substrate</name>
    </ligand>
</feature>
<feature type="binding site" evidence="7 17">
    <location>
        <position position="383"/>
    </location>
    <ligand>
        <name>Zn(2+)</name>
        <dbReference type="ChEBI" id="CHEBI:29105"/>
        <note>catalytic</note>
    </ligand>
</feature>
<feature type="binding site" evidence="7 17">
    <location>
        <position position="387"/>
    </location>
    <ligand>
        <name>Zn(2+)</name>
        <dbReference type="ChEBI" id="CHEBI:29105"/>
        <note>catalytic</note>
    </ligand>
</feature>
<feature type="binding site" evidence="7 17">
    <location>
        <position position="406"/>
    </location>
    <ligand>
        <name>Zn(2+)</name>
        <dbReference type="ChEBI" id="CHEBI:29105"/>
        <note>catalytic</note>
    </ligand>
</feature>
<feature type="site" description="Transition state stabilizer" evidence="1">
    <location>
        <position position="472"/>
    </location>
</feature>
<feature type="modified residue" description="Sulfotyrosine" evidence="3">
    <location>
        <position position="171"/>
    </location>
</feature>
<feature type="glycosylation site" description="N-linked (GlcNAc...) asparagine" evidence="7 17">
    <location>
        <position position="82"/>
    </location>
</feature>
<feature type="glycosylation site" description="N-linked (GlcNAc...) asparagine" evidence="7 17">
    <location>
        <position position="124"/>
    </location>
</feature>
<feature type="glycosylation site" description="N-linked (GlcNAc...) asparagine" evidence="7 17">
    <location>
        <position position="229"/>
    </location>
</feature>
<feature type="glycosylation site" description="N-linked (GlcNAc...) asparagine" evidence="7 17">
    <location>
        <position position="237"/>
    </location>
</feature>
<feature type="glycosylation site" description="N-linked (GlcNAc...) asparagine" evidence="3">
    <location>
        <position position="258"/>
    </location>
</feature>
<feature type="glycosylation site" description="N-linked (GlcNAc...) asparagine" evidence="3">
    <location>
        <position position="286"/>
    </location>
</feature>
<feature type="glycosylation site" description="N-linked (GlcNAc...) asparagine" evidence="7 17">
    <location>
        <position position="314"/>
    </location>
</feature>
<feature type="glycosylation site" description="N-linked (GlcNAc...) asparagine" evidence="7 17">
    <location>
        <position position="328"/>
    </location>
</feature>
<feature type="glycosylation site" description="N-linked (GlcNAc...) asparagine" evidence="7 17">
    <location>
        <position position="506"/>
    </location>
</feature>
<feature type="glycosylation site" description="N-linked (GlcNAc...) asparagine" evidence="3">
    <location>
        <position position="556"/>
    </location>
</feature>
<feature type="glycosylation site" description="N-linked (GlcNAc...) asparagine" evidence="3">
    <location>
        <position position="569"/>
    </location>
</feature>
<feature type="glycosylation site" description="N-linked (GlcNAc...) asparagine" evidence="7 17">
    <location>
        <position position="622"/>
    </location>
</feature>
<feature type="glycosylation site" description="N-linked (GlcNAc...) asparagine" evidence="7 17">
    <location>
        <position position="646"/>
    </location>
</feature>
<feature type="glycosylation site" description="N-linked (GlcNAc...) asparagine" evidence="7 17">
    <location>
        <position position="736"/>
    </location>
</feature>
<feature type="disulfide bond" evidence="7">
    <location>
        <begin position="758"/>
        <end position="765"/>
    </location>
</feature>
<feature type="disulfide bond" evidence="7">
    <location>
        <begin position="795"/>
        <end position="831"/>
    </location>
</feature>
<feature type="sequence conflict" description="In Ref. 1; CAA82641 and 2; CAA34216." evidence="15" ref="1 2">
    <original>N</original>
    <variation>F</variation>
    <location>
        <position position="82"/>
    </location>
</feature>
<feature type="sequence conflict" description="In Ref. 4; CAA23291." evidence="15" ref="4">
    <original>LL</original>
    <variation>FI</variation>
    <location>
        <begin position="107"/>
        <end position="108"/>
    </location>
</feature>
<feature type="sequence conflict" description="In Ref. 4; CAA23291." evidence="15" ref="4">
    <original>E</original>
    <variation>G</variation>
    <location>
        <position position="111"/>
    </location>
</feature>
<feature type="sequence conflict" description="In Ref. 4; CAA23291." evidence="15" ref="4">
    <original>T</original>
    <variation>N</variation>
    <location>
        <position position="126"/>
    </location>
</feature>
<feature type="sequence conflict" description="In Ref. 4; CAA23291." evidence="15" ref="4">
    <original>S</original>
    <variation>F</variation>
    <location>
        <position position="140"/>
    </location>
</feature>
<feature type="helix" evidence="19">
    <location>
        <begin position="66"/>
        <end position="68"/>
    </location>
</feature>
<feature type="strand" evidence="19">
    <location>
        <begin position="69"/>
        <end position="71"/>
    </location>
</feature>
<feature type="strand" evidence="19">
    <location>
        <begin position="74"/>
        <end position="87"/>
    </location>
</feature>
<feature type="strand" evidence="19">
    <location>
        <begin position="93"/>
        <end position="95"/>
    </location>
</feature>
<feature type="strand" evidence="19">
    <location>
        <begin position="98"/>
        <end position="111"/>
    </location>
</feature>
<feature type="strand" evidence="19">
    <location>
        <begin position="113"/>
        <end position="119"/>
    </location>
</feature>
<feature type="strand" evidence="20">
    <location>
        <begin position="122"/>
        <end position="125"/>
    </location>
</feature>
<feature type="strand" evidence="19">
    <location>
        <begin position="128"/>
        <end position="131"/>
    </location>
</feature>
<feature type="strand" evidence="19">
    <location>
        <begin position="133"/>
        <end position="137"/>
    </location>
</feature>
<feature type="strand" evidence="19">
    <location>
        <begin position="145"/>
        <end position="151"/>
    </location>
</feature>
<feature type="turn" evidence="19">
    <location>
        <begin position="152"/>
        <end position="155"/>
    </location>
</feature>
<feature type="strand" evidence="19">
    <location>
        <begin position="156"/>
        <end position="165"/>
    </location>
</feature>
<feature type="strand" evidence="19">
    <location>
        <begin position="170"/>
        <end position="180"/>
    </location>
</feature>
<feature type="strand" evidence="19">
    <location>
        <begin position="183"/>
        <end position="195"/>
    </location>
</feature>
<feature type="strand" evidence="19">
    <location>
        <begin position="198"/>
        <end position="206"/>
    </location>
</feature>
<feature type="turn" evidence="19">
    <location>
        <begin position="208"/>
        <end position="211"/>
    </location>
</feature>
<feature type="helix" evidence="19">
    <location>
        <begin position="212"/>
        <end position="214"/>
    </location>
</feature>
<feature type="strand" evidence="18">
    <location>
        <begin position="221"/>
        <end position="224"/>
    </location>
</feature>
<feature type="strand" evidence="19">
    <location>
        <begin position="226"/>
        <end position="235"/>
    </location>
</feature>
<feature type="strand" evidence="19">
    <location>
        <begin position="238"/>
        <end position="244"/>
    </location>
</feature>
<feature type="strand" evidence="19">
    <location>
        <begin position="246"/>
        <end position="249"/>
    </location>
</feature>
<feature type="strand" evidence="21">
    <location>
        <begin position="251"/>
        <end position="253"/>
    </location>
</feature>
<feature type="strand" evidence="18">
    <location>
        <begin position="254"/>
        <end position="256"/>
    </location>
</feature>
<feature type="strand" evidence="19">
    <location>
        <begin position="259"/>
        <end position="264"/>
    </location>
</feature>
<feature type="helix" evidence="19">
    <location>
        <begin position="272"/>
        <end position="274"/>
    </location>
</feature>
<feature type="strand" evidence="19">
    <location>
        <begin position="277"/>
        <end position="281"/>
    </location>
</feature>
<feature type="strand" evidence="19">
    <location>
        <begin position="283"/>
        <end position="288"/>
    </location>
</feature>
<feature type="strand" evidence="19">
    <location>
        <begin position="294"/>
        <end position="299"/>
    </location>
</feature>
<feature type="helix" evidence="19">
    <location>
        <begin position="301"/>
        <end position="305"/>
    </location>
</feature>
<feature type="turn" evidence="19">
    <location>
        <begin position="306"/>
        <end position="309"/>
    </location>
</feature>
<feature type="helix" evidence="19">
    <location>
        <begin position="310"/>
        <end position="326"/>
    </location>
</feature>
<feature type="strand" evidence="19">
    <location>
        <begin position="332"/>
        <end position="341"/>
    </location>
</feature>
<feature type="strand" evidence="21">
    <location>
        <begin position="345"/>
        <end position="349"/>
    </location>
</feature>
<feature type="strand" evidence="19">
    <location>
        <begin position="354"/>
        <end position="358"/>
    </location>
</feature>
<feature type="helix" evidence="19">
    <location>
        <begin position="359"/>
        <end position="362"/>
    </location>
</feature>
<feature type="turn" evidence="19">
    <location>
        <begin position="366"/>
        <end position="368"/>
    </location>
</feature>
<feature type="helix" evidence="19">
    <location>
        <begin position="371"/>
        <end position="386"/>
    </location>
</feature>
<feature type="turn" evidence="19">
    <location>
        <begin position="387"/>
        <end position="389"/>
    </location>
</feature>
<feature type="turn" evidence="19">
    <location>
        <begin position="391"/>
        <end position="393"/>
    </location>
</feature>
<feature type="strand" evidence="19">
    <location>
        <begin position="394"/>
        <end position="398"/>
    </location>
</feature>
<feature type="helix" evidence="19">
    <location>
        <begin position="399"/>
        <end position="401"/>
    </location>
</feature>
<feature type="helix" evidence="19">
    <location>
        <begin position="402"/>
        <end position="420"/>
    </location>
</feature>
<feature type="helix" evidence="21">
    <location>
        <begin position="422"/>
        <end position="424"/>
    </location>
</feature>
<feature type="helix" evidence="19">
    <location>
        <begin position="426"/>
        <end position="429"/>
    </location>
</feature>
<feature type="helix" evidence="19">
    <location>
        <begin position="430"/>
        <end position="433"/>
    </location>
</feature>
<feature type="helix" evidence="19">
    <location>
        <begin position="435"/>
        <end position="442"/>
    </location>
</feature>
<feature type="helix" evidence="19">
    <location>
        <begin position="454"/>
        <end position="456"/>
    </location>
</feature>
<feature type="helix" evidence="19">
    <location>
        <begin position="460"/>
        <end position="464"/>
    </location>
</feature>
<feature type="helix" evidence="19">
    <location>
        <begin position="469"/>
        <end position="486"/>
    </location>
</feature>
<feature type="helix" evidence="19">
    <location>
        <begin position="488"/>
        <end position="502"/>
    </location>
</feature>
<feature type="strand" evidence="19">
    <location>
        <begin position="505"/>
        <end position="507"/>
    </location>
</feature>
<feature type="helix" evidence="19">
    <location>
        <begin position="509"/>
        <end position="521"/>
    </location>
</feature>
<feature type="strand" evidence="21">
    <location>
        <begin position="524"/>
        <end position="526"/>
    </location>
</feature>
<feature type="helix" evidence="19">
    <location>
        <begin position="532"/>
        <end position="540"/>
    </location>
</feature>
<feature type="strand" evidence="19">
    <location>
        <begin position="546"/>
        <end position="550"/>
    </location>
</feature>
<feature type="turn" evidence="19">
    <location>
        <begin position="552"/>
        <end position="554"/>
    </location>
</feature>
<feature type="strand" evidence="19">
    <location>
        <begin position="556"/>
        <end position="561"/>
    </location>
</feature>
<feature type="strand" evidence="22">
    <location>
        <begin position="564"/>
        <end position="566"/>
    </location>
</feature>
<feature type="turn" evidence="19">
    <location>
        <begin position="575"/>
        <end position="578"/>
    </location>
</feature>
<feature type="strand" evidence="19">
    <location>
        <begin position="582"/>
        <end position="584"/>
    </location>
</feature>
<feature type="strand" evidence="19">
    <location>
        <begin position="586"/>
        <end position="588"/>
    </location>
</feature>
<feature type="strand" evidence="19">
    <location>
        <begin position="596"/>
        <end position="598"/>
    </location>
</feature>
<feature type="strand" evidence="19">
    <location>
        <begin position="602"/>
        <end position="605"/>
    </location>
</feature>
<feature type="helix" evidence="19">
    <location>
        <begin position="607"/>
        <end position="609"/>
    </location>
</feature>
<feature type="strand" evidence="19">
    <location>
        <begin position="617"/>
        <end position="620"/>
    </location>
</feature>
<feature type="helix" evidence="19">
    <location>
        <begin position="621"/>
        <end position="623"/>
    </location>
</feature>
<feature type="strand" evidence="19">
    <location>
        <begin position="628"/>
        <end position="631"/>
    </location>
</feature>
<feature type="helix" evidence="19">
    <location>
        <begin position="633"/>
        <end position="645"/>
    </location>
</feature>
<feature type="helix" evidence="19">
    <location>
        <begin position="647"/>
        <end position="649"/>
    </location>
</feature>
<feature type="helix" evidence="19">
    <location>
        <begin position="652"/>
        <end position="667"/>
    </location>
</feature>
<feature type="turn" evidence="22">
    <location>
        <begin position="668"/>
        <end position="670"/>
    </location>
</feature>
<feature type="helix" evidence="19">
    <location>
        <begin position="673"/>
        <end position="678"/>
    </location>
</feature>
<feature type="helix" evidence="19">
    <location>
        <begin position="679"/>
        <end position="685"/>
    </location>
</feature>
<feature type="helix" evidence="19">
    <location>
        <begin position="689"/>
        <end position="706"/>
    </location>
</feature>
<feature type="helix" evidence="19">
    <location>
        <begin position="712"/>
        <end position="733"/>
    </location>
</feature>
<feature type="turn" evidence="19">
    <location>
        <begin position="734"/>
        <end position="738"/>
    </location>
</feature>
<feature type="helix" evidence="19">
    <location>
        <begin position="744"/>
        <end position="759"/>
    </location>
</feature>
<feature type="helix" evidence="19">
    <location>
        <begin position="763"/>
        <end position="777"/>
    </location>
</feature>
<feature type="turn" evidence="19">
    <location>
        <begin position="787"/>
        <end position="789"/>
    </location>
</feature>
<feature type="helix" evidence="19">
    <location>
        <begin position="790"/>
        <end position="800"/>
    </location>
</feature>
<feature type="helix" evidence="19">
    <location>
        <begin position="803"/>
        <end position="815"/>
    </location>
</feature>
<feature type="helix" evidence="19">
    <location>
        <begin position="819"/>
        <end position="829"/>
    </location>
</feature>
<feature type="helix" evidence="19">
    <location>
        <begin position="835"/>
        <end position="844"/>
    </location>
</feature>
<feature type="turn" evidence="19">
    <location>
        <begin position="848"/>
        <end position="850"/>
    </location>
</feature>
<feature type="helix" evidence="19">
    <location>
        <begin position="853"/>
        <end position="855"/>
    </location>
</feature>
<feature type="helix" evidence="19">
    <location>
        <begin position="856"/>
        <end position="865"/>
    </location>
</feature>
<feature type="helix" evidence="19">
    <location>
        <begin position="869"/>
        <end position="880"/>
    </location>
</feature>
<feature type="turn" evidence="19">
    <location>
        <begin position="882"/>
        <end position="886"/>
    </location>
</feature>
<feature type="strand" evidence="19">
    <location>
        <begin position="887"/>
        <end position="890"/>
    </location>
</feature>
<feature type="helix" evidence="19">
    <location>
        <begin position="895"/>
        <end position="903"/>
    </location>
</feature>
<feature type="helix" evidence="19">
    <location>
        <begin position="909"/>
        <end position="919"/>
    </location>
</feature>
<feature type="helix" evidence="20">
    <location>
        <begin position="920"/>
        <end position="922"/>
    </location>
</feature>
<feature type="strand" evidence="19">
    <location>
        <begin position="923"/>
        <end position="925"/>
    </location>
</feature>
<feature type="helix" evidence="19">
    <location>
        <begin position="928"/>
        <end position="930"/>
    </location>
</feature>
<feature type="helix" evidence="19">
    <location>
        <begin position="933"/>
        <end position="962"/>
    </location>
</feature>
<reference key="1">
    <citation type="journal article" date="1994" name="J. Virol.">
        <title>Determinants essential for the transmissible gastroenteritis virus-receptor interaction reside within a domain of aminopeptidase-N that is distinct from the enzymatic site.</title>
        <authorList>
            <person name="Delmas B."/>
            <person name="Gelfi J."/>
            <person name="Kut E."/>
            <person name="Sjoestroem H."/>
            <person name="Noren O."/>
            <person name="Laude H."/>
        </authorList>
    </citation>
    <scope>NUCLEOTIDE SEQUENCE [MRNA]</scope>
    <scope>FUNCTION (MICROBIAL INFECTION)</scope>
    <scope>IDENTIFICATION OF RECEPTOR FUNCTIONAL DOMAINS FOR TGEV INFECTION</scope>
    <scope>SUBCELLULAR LOCATION</scope>
    <scope>TOPOLOGY</scope>
</reference>
<reference key="2">
    <citation type="journal article" date="1989" name="FEBS Lett.">
        <title>Cloning of the pig aminopeptidase N gene. Identification of possible regulatory elements and the exon distribution in relation to the membrane-spanning region.</title>
        <authorList>
            <person name="Olsen J."/>
            <person name="Sjoestroem H."/>
            <person name="Noren O."/>
        </authorList>
    </citation>
    <scope>NUCLEOTIDE SEQUENCE [GENOMIC DNA] OF 1-294</scope>
</reference>
<reference key="3">
    <citation type="journal article" date="1990" name="Biochem. J.">
        <title>Identification and characterization of the major stilbene-disulphonate- and concanavalin A-binding protein of the porcine renal brush-border membrane as aminopeptidase N.</title>
        <authorList>
            <person name="See H."/>
            <person name="Reithmeier R.A.F."/>
        </authorList>
    </citation>
    <scope>PROTEIN SEQUENCE OF 2-40</scope>
</reference>
<reference key="4">
    <citation type="journal article" date="1996" name="Mamm. Genome">
        <title>Evaluation and characterization of a porcine small intestine cDNA library: analysis of 839 clones.</title>
        <authorList>
            <person name="Winteroe A.K."/>
            <person name="Fredholm M."/>
            <person name="Davies W."/>
        </authorList>
    </citation>
    <scope>NUCLEOTIDE SEQUENCE [LARGE SCALE MRNA] OF 1-144</scope>
    <source>
        <tissue>Small intestine</tissue>
    </source>
</reference>
<reference key="5">
    <citation type="journal article" date="1992" name="Nature">
        <title>Aminopeptidase N is a major receptor for the entero-pathogenic coronavirus TGEV.</title>
        <authorList>
            <person name="Delmas B."/>
            <person name="Gelfi J."/>
            <person name="L'Haridon R."/>
            <person name="Vogel L.K."/>
            <person name="Sjostrom H."/>
            <person name="Noren O."/>
            <person name="Laude H."/>
        </authorList>
    </citation>
    <scope>CHARACTERIZATION OF TGEV RECEPTOR FUNCTION</scope>
</reference>
<reference key="6">
    <citation type="journal article" date="1993" name="Adv. Exp. Med. Biol.">
        <title>Further characterization of aminopeptidase-N as a receptor for coronaviruses.</title>
        <authorList>
            <person name="Delmas B."/>
            <person name="Gelfi J."/>
            <person name="Sjostrom H."/>
            <person name="Noren O."/>
            <person name="Laude H."/>
        </authorList>
    </citation>
    <scope>CHARACTERIZATION OF PRCOV RECEPTOR FUNCTION</scope>
</reference>
<reference key="7">
    <citation type="journal article" date="1995" name="J. Gastroenterol.">
        <title>Purification and characterization of aminopeptidase M from muscle and mucosa of the pig intestine.</title>
        <authorList>
            <person name="Terashima H."/>
            <person name="Bunnett N.W."/>
        </authorList>
    </citation>
    <scope>CATALYTIC ACTIVITY</scope>
</reference>
<reference key="8">
    <citation type="journal article" date="1997" name="J. Virol.">
        <title>Interspecies aminopeptidase-N chimeras reveal species-specific receptor recognition by canine coronavirus, feline infectious peritonitis virus, and transmissible gastroenteritis virus.</title>
        <authorList>
            <person name="Benbacer L."/>
            <person name="Kut E."/>
            <person name="Besnardeau L."/>
            <person name="Laude H."/>
            <person name="Delmas B."/>
        </authorList>
    </citation>
    <scope>FUNCTION (MICROBIAL INFECTION)</scope>
    <scope>IDENTIFICATION OF RECEPTOR FUNCTIONAL DOMAINS FOR TGEV INFECTION</scope>
</reference>
<reference key="9">
    <citation type="journal article" date="1998" name="J. Gen. Virol.">
        <title>Characterization of determinants involved in the feline infectious peritonitis virus receptor function of feline aminopeptidase N.</title>
        <authorList>
            <person name="Hegyi A."/>
            <person name="Kolb A.F."/>
        </authorList>
    </citation>
    <scope>FUNCTION (MICROBIAL INFECTION)</scope>
    <scope>IDENTIFICATION OF RECEPTOR FUNCTIONAL DOMAINS FOR TGEV INFECTION</scope>
</reference>
<reference key="10">
    <citation type="journal article" date="1981" name="Biochem. J.">
        <title>Subunit structured of pig small-intestinal brush-border aminopeptidase N.</title>
        <authorList>
            <person name="Benajiba A."/>
            <person name="Maroux S."/>
        </authorList>
    </citation>
    <scope>SUBUNIT</scope>
</reference>
<reference key="11">
    <citation type="journal article" date="1987" name="EMBO J.">
        <title>Tyrosine sulfation, a post-translational modification of microvillar enzymes in the small intestinal enterocyte.</title>
        <authorList>
            <person name="Danielsen E.M."/>
        </authorList>
    </citation>
    <scope>SULFATION</scope>
</reference>
<reference key="12">
    <citation type="journal article" date="2012" name="PLoS Pathog.">
        <title>Structural bases of coronavirus attachment to host aminopeptidase N and its inhibition by neutralizing antibodies.</title>
        <authorList>
            <person name="Reguera J."/>
            <person name="Santiago C."/>
            <person name="Mudgal G."/>
            <person name="Ordono D."/>
            <person name="Enjuanes L."/>
            <person name="Casasnovas J.M."/>
        </authorList>
    </citation>
    <scope>X-RAY CRYSTALLOGRAPHY (3.2 ANGSTROMS) OF 36-963 IN COMPLEX WITH PORCINE RESPIRATORY CORONAVIRUS S PROTEIN</scope>
    <scope>SUBUNIT</scope>
    <scope>COFACTOR</scope>
    <scope>ZINC-BINDING SITES</scope>
    <scope>DISULFIDE BONDS</scope>
    <scope>GLYCOSYLATION AT ASN-82; ASN-124; ASN-229; ASN-237; ASN-314; ASN-328; ASN-506; ASN-622; ASN-646 AND ASN-736</scope>
</reference>
<proteinExistence type="evidence at protein level"/>
<keyword id="KW-0002">3D-structure</keyword>
<keyword id="KW-0031">Aminopeptidase</keyword>
<keyword id="KW-0037">Angiogenesis</keyword>
<keyword id="KW-1003">Cell membrane</keyword>
<keyword id="KW-0217">Developmental protein</keyword>
<keyword id="KW-0221">Differentiation</keyword>
<keyword id="KW-0903">Direct protein sequencing</keyword>
<keyword id="KW-1015">Disulfide bond</keyword>
<keyword id="KW-0325">Glycoprotein</keyword>
<keyword id="KW-1183">Host cell receptor for virus entry</keyword>
<keyword id="KW-0945">Host-virus interaction</keyword>
<keyword id="KW-0378">Hydrolase</keyword>
<keyword id="KW-0472">Membrane</keyword>
<keyword id="KW-0479">Metal-binding</keyword>
<keyword id="KW-0482">Metalloprotease</keyword>
<keyword id="KW-0645">Protease</keyword>
<keyword id="KW-0675">Receptor</keyword>
<keyword id="KW-1185">Reference proteome</keyword>
<keyword id="KW-0735">Signal-anchor</keyword>
<keyword id="KW-0765">Sulfation</keyword>
<keyword id="KW-0812">Transmembrane</keyword>
<keyword id="KW-1133">Transmembrane helix</keyword>
<keyword id="KW-0862">Zinc</keyword>
<accession>P15145</accession>
<accession>Q29242</accession>
<gene>
    <name type="primary">ANPEP</name>
</gene>